<feature type="chain" id="PRO_1000213863" description="Orotate phosphoribosyltransferase">
    <location>
        <begin position="1"/>
        <end position="214"/>
    </location>
</feature>
<feature type="binding site" description="in other chain" evidence="1">
    <location>
        <position position="26"/>
    </location>
    <ligand>
        <name>5-phospho-alpha-D-ribose 1-diphosphate</name>
        <dbReference type="ChEBI" id="CHEBI:58017"/>
        <note>ligand shared between dimeric partners</note>
    </ligand>
</feature>
<feature type="binding site" evidence="1">
    <location>
        <begin position="34"/>
        <end position="35"/>
    </location>
    <ligand>
        <name>orotate</name>
        <dbReference type="ChEBI" id="CHEBI:30839"/>
    </ligand>
</feature>
<feature type="binding site" description="in other chain" evidence="1">
    <location>
        <begin position="72"/>
        <end position="73"/>
    </location>
    <ligand>
        <name>5-phospho-alpha-D-ribose 1-diphosphate</name>
        <dbReference type="ChEBI" id="CHEBI:58017"/>
        <note>ligand shared between dimeric partners</note>
    </ligand>
</feature>
<feature type="binding site" evidence="1">
    <location>
        <position position="99"/>
    </location>
    <ligand>
        <name>5-phospho-alpha-D-ribose 1-diphosphate</name>
        <dbReference type="ChEBI" id="CHEBI:58017"/>
        <note>ligand shared between dimeric partners</note>
    </ligand>
</feature>
<feature type="binding site" description="in other chain" evidence="1">
    <location>
        <position position="100"/>
    </location>
    <ligand>
        <name>5-phospho-alpha-D-ribose 1-diphosphate</name>
        <dbReference type="ChEBI" id="CHEBI:58017"/>
        <note>ligand shared between dimeric partners</note>
    </ligand>
</feature>
<feature type="binding site" evidence="1">
    <location>
        <position position="103"/>
    </location>
    <ligand>
        <name>5-phospho-alpha-D-ribose 1-diphosphate</name>
        <dbReference type="ChEBI" id="CHEBI:58017"/>
        <note>ligand shared between dimeric partners</note>
    </ligand>
</feature>
<feature type="binding site" evidence="1">
    <location>
        <position position="105"/>
    </location>
    <ligand>
        <name>5-phospho-alpha-D-ribose 1-diphosphate</name>
        <dbReference type="ChEBI" id="CHEBI:58017"/>
        <note>ligand shared between dimeric partners</note>
    </ligand>
</feature>
<feature type="binding site" description="in other chain" evidence="1">
    <location>
        <begin position="124"/>
        <end position="132"/>
    </location>
    <ligand>
        <name>5-phospho-alpha-D-ribose 1-diphosphate</name>
        <dbReference type="ChEBI" id="CHEBI:58017"/>
        <note>ligand shared between dimeric partners</note>
    </ligand>
</feature>
<feature type="binding site" evidence="1">
    <location>
        <position position="128"/>
    </location>
    <ligand>
        <name>orotate</name>
        <dbReference type="ChEBI" id="CHEBI:30839"/>
    </ligand>
</feature>
<feature type="binding site" evidence="1">
    <location>
        <position position="157"/>
    </location>
    <ligand>
        <name>orotate</name>
        <dbReference type="ChEBI" id="CHEBI:30839"/>
    </ligand>
</feature>
<proteinExistence type="inferred from homology"/>
<keyword id="KW-0328">Glycosyltransferase</keyword>
<keyword id="KW-0460">Magnesium</keyword>
<keyword id="KW-0665">Pyrimidine biosynthesis</keyword>
<keyword id="KW-0808">Transferase</keyword>
<gene>
    <name evidence="1" type="primary">pyrE</name>
    <name type="ordered locus">PFLU_5988</name>
</gene>
<organism>
    <name type="scientific">Pseudomonas fluorescens (strain SBW25)</name>
    <dbReference type="NCBI Taxonomy" id="216595"/>
    <lineage>
        <taxon>Bacteria</taxon>
        <taxon>Pseudomonadati</taxon>
        <taxon>Pseudomonadota</taxon>
        <taxon>Gammaproteobacteria</taxon>
        <taxon>Pseudomonadales</taxon>
        <taxon>Pseudomonadaceae</taxon>
        <taxon>Pseudomonas</taxon>
    </lineage>
</organism>
<evidence type="ECO:0000255" key="1">
    <source>
        <dbReference type="HAMAP-Rule" id="MF_01208"/>
    </source>
</evidence>
<reference key="1">
    <citation type="journal article" date="2009" name="Genome Biol.">
        <title>Genomic and genetic analyses of diversity and plant interactions of Pseudomonas fluorescens.</title>
        <authorList>
            <person name="Silby M.W."/>
            <person name="Cerdeno-Tarraga A.M."/>
            <person name="Vernikos G.S."/>
            <person name="Giddens S.R."/>
            <person name="Jackson R.W."/>
            <person name="Preston G.M."/>
            <person name="Zhang X.-X."/>
            <person name="Moon C.D."/>
            <person name="Gehrig S.M."/>
            <person name="Godfrey S.A.C."/>
            <person name="Knight C.G."/>
            <person name="Malone J.G."/>
            <person name="Robinson Z."/>
            <person name="Spiers A.J."/>
            <person name="Harris S."/>
            <person name="Challis G.L."/>
            <person name="Yaxley A.M."/>
            <person name="Harris D."/>
            <person name="Seeger K."/>
            <person name="Murphy L."/>
            <person name="Rutter S."/>
            <person name="Squares R."/>
            <person name="Quail M.A."/>
            <person name="Saunders E."/>
            <person name="Mavromatis K."/>
            <person name="Brettin T.S."/>
            <person name="Bentley S.D."/>
            <person name="Hothersall J."/>
            <person name="Stephens E."/>
            <person name="Thomas C.M."/>
            <person name="Parkhill J."/>
            <person name="Levy S.B."/>
            <person name="Rainey P.B."/>
            <person name="Thomson N.R."/>
        </authorList>
    </citation>
    <scope>NUCLEOTIDE SEQUENCE [LARGE SCALE GENOMIC DNA]</scope>
    <source>
        <strain>SBW25</strain>
    </source>
</reference>
<dbReference type="EC" id="2.4.2.10" evidence="1"/>
<dbReference type="EMBL" id="AM181176">
    <property type="protein sequence ID" value="CAY53514.1"/>
    <property type="molecule type" value="Genomic_DNA"/>
</dbReference>
<dbReference type="RefSeq" id="WP_003195489.1">
    <property type="nucleotide sequence ID" value="NC_012660.1"/>
</dbReference>
<dbReference type="SMR" id="C3K476"/>
<dbReference type="STRING" id="294.SRM1_05683"/>
<dbReference type="GeneID" id="93467616"/>
<dbReference type="eggNOG" id="COG0461">
    <property type="taxonomic scope" value="Bacteria"/>
</dbReference>
<dbReference type="HOGENOM" id="CLU_074878_0_1_6"/>
<dbReference type="OrthoDB" id="9779060at2"/>
<dbReference type="UniPathway" id="UPA00070">
    <property type="reaction ID" value="UER00119"/>
</dbReference>
<dbReference type="GO" id="GO:0005737">
    <property type="term" value="C:cytoplasm"/>
    <property type="evidence" value="ECO:0007669"/>
    <property type="project" value="TreeGrafter"/>
</dbReference>
<dbReference type="GO" id="GO:0000287">
    <property type="term" value="F:magnesium ion binding"/>
    <property type="evidence" value="ECO:0007669"/>
    <property type="project" value="UniProtKB-UniRule"/>
</dbReference>
<dbReference type="GO" id="GO:0004588">
    <property type="term" value="F:orotate phosphoribosyltransferase activity"/>
    <property type="evidence" value="ECO:0007669"/>
    <property type="project" value="UniProtKB-UniRule"/>
</dbReference>
<dbReference type="GO" id="GO:0006207">
    <property type="term" value="P:'de novo' pyrimidine nucleobase biosynthetic process"/>
    <property type="evidence" value="ECO:0007669"/>
    <property type="project" value="TreeGrafter"/>
</dbReference>
<dbReference type="GO" id="GO:0044205">
    <property type="term" value="P:'de novo' UMP biosynthetic process"/>
    <property type="evidence" value="ECO:0007669"/>
    <property type="project" value="UniProtKB-UniRule"/>
</dbReference>
<dbReference type="GO" id="GO:0046132">
    <property type="term" value="P:pyrimidine ribonucleoside biosynthetic process"/>
    <property type="evidence" value="ECO:0007669"/>
    <property type="project" value="TreeGrafter"/>
</dbReference>
<dbReference type="CDD" id="cd06223">
    <property type="entry name" value="PRTases_typeI"/>
    <property type="match status" value="1"/>
</dbReference>
<dbReference type="FunFam" id="3.40.50.2020:FF:000008">
    <property type="entry name" value="Orotate phosphoribosyltransferase"/>
    <property type="match status" value="1"/>
</dbReference>
<dbReference type="Gene3D" id="3.40.50.2020">
    <property type="match status" value="1"/>
</dbReference>
<dbReference type="HAMAP" id="MF_01208">
    <property type="entry name" value="PyrE"/>
    <property type="match status" value="1"/>
</dbReference>
<dbReference type="InterPro" id="IPR023031">
    <property type="entry name" value="OPRT"/>
</dbReference>
<dbReference type="InterPro" id="IPR004467">
    <property type="entry name" value="Or_phspho_trans_dom"/>
</dbReference>
<dbReference type="InterPro" id="IPR000836">
    <property type="entry name" value="PRibTrfase_dom"/>
</dbReference>
<dbReference type="InterPro" id="IPR029057">
    <property type="entry name" value="PRTase-like"/>
</dbReference>
<dbReference type="NCBIfam" id="TIGR00336">
    <property type="entry name" value="pyrE"/>
    <property type="match status" value="1"/>
</dbReference>
<dbReference type="PANTHER" id="PTHR46683">
    <property type="entry name" value="OROTATE PHOSPHORIBOSYLTRANSFERASE 1-RELATED"/>
    <property type="match status" value="1"/>
</dbReference>
<dbReference type="PANTHER" id="PTHR46683:SF1">
    <property type="entry name" value="OROTATE PHOSPHORIBOSYLTRANSFERASE 1-RELATED"/>
    <property type="match status" value="1"/>
</dbReference>
<dbReference type="Pfam" id="PF00156">
    <property type="entry name" value="Pribosyltran"/>
    <property type="match status" value="1"/>
</dbReference>
<dbReference type="SUPFAM" id="SSF53271">
    <property type="entry name" value="PRTase-like"/>
    <property type="match status" value="1"/>
</dbReference>
<dbReference type="PROSITE" id="PS00103">
    <property type="entry name" value="PUR_PYR_PR_TRANSFER"/>
    <property type="match status" value="1"/>
</dbReference>
<sequence length="214" mass="23093">MQAYQRDFIRFAIDRGVLRFGEFTLKSGRTSPYFFNAGLFNSGSALAQLGRFYAAAIVESGISFDVLFGPAYKGIPLAAATAVALAEHHGQDLPWCFNRKEAKAHGEGGSLVGAPLTGDVLIIDDVITAGTAIREVMQIIASQDGAKAAGVLIALNRQERGNGELSAIQEVERDFGIPVVSIVSLNQVLQFLEDDPQLKQHLPAVRAYREQFGV</sequence>
<protein>
    <recommendedName>
        <fullName evidence="1">Orotate phosphoribosyltransferase</fullName>
        <shortName evidence="1">OPRT</shortName>
        <shortName evidence="1">OPRTase</shortName>
        <ecNumber evidence="1">2.4.2.10</ecNumber>
    </recommendedName>
</protein>
<accession>C3K476</accession>
<comment type="function">
    <text evidence="1">Catalyzes the transfer of a ribosyl phosphate group from 5-phosphoribose 1-diphosphate to orotate, leading to the formation of orotidine monophosphate (OMP).</text>
</comment>
<comment type="catalytic activity">
    <reaction evidence="1">
        <text>orotidine 5'-phosphate + diphosphate = orotate + 5-phospho-alpha-D-ribose 1-diphosphate</text>
        <dbReference type="Rhea" id="RHEA:10380"/>
        <dbReference type="ChEBI" id="CHEBI:30839"/>
        <dbReference type="ChEBI" id="CHEBI:33019"/>
        <dbReference type="ChEBI" id="CHEBI:57538"/>
        <dbReference type="ChEBI" id="CHEBI:58017"/>
        <dbReference type="EC" id="2.4.2.10"/>
    </reaction>
</comment>
<comment type="cofactor">
    <cofactor evidence="1">
        <name>Mg(2+)</name>
        <dbReference type="ChEBI" id="CHEBI:18420"/>
    </cofactor>
</comment>
<comment type="pathway">
    <text evidence="1">Pyrimidine metabolism; UMP biosynthesis via de novo pathway; UMP from orotate: step 1/2.</text>
</comment>
<comment type="subunit">
    <text evidence="1">Homodimer.</text>
</comment>
<comment type="similarity">
    <text evidence="1">Belongs to the purine/pyrimidine phosphoribosyltransferase family. PyrE subfamily.</text>
</comment>
<name>PYRE_PSEFS</name>